<dbReference type="EMBL" id="AC245427">
    <property type="status" value="NOT_ANNOTATED_CDS"/>
    <property type="molecule type" value="Genomic_DNA"/>
</dbReference>
<dbReference type="IMGT_GENE-DB" id="TRBJ2-7"/>
<dbReference type="BioMuta" id="TRBJ2-7"/>
<dbReference type="Ensembl" id="ENST00000390419.1">
    <property type="protein sequence ID" value="ENSP00000417622.1"/>
    <property type="gene ID" value="ENSG00000211771.1"/>
</dbReference>
<dbReference type="UCSC" id="uc064itp.1">
    <property type="organism name" value="human"/>
</dbReference>
<dbReference type="AGR" id="HGNC:12175"/>
<dbReference type="GeneCards" id="TRBJ2-7"/>
<dbReference type="HGNC" id="HGNC:12175">
    <property type="gene designation" value="TRBJ2-7"/>
</dbReference>
<dbReference type="HPA" id="ENSG00000211771">
    <property type="expression patterns" value="Tissue enhanced (bone marrow, lymphoid tissue)"/>
</dbReference>
<dbReference type="neXtProt" id="NX_A0A0A0MT78"/>
<dbReference type="VEuPathDB" id="HostDB:ENSG00000211771"/>
<dbReference type="HOGENOM" id="CLU_221942_7_3_1"/>
<dbReference type="InParanoid" id="A0A0A0MT78"/>
<dbReference type="PAN-GO" id="A0A0A0MT78">
    <property type="GO annotations" value="0 GO annotations based on evolutionary models"/>
</dbReference>
<dbReference type="SignaLink" id="A0A0A0MT78"/>
<dbReference type="ChiTaRS" id="TRBJ2-7">
    <property type="organism name" value="human"/>
</dbReference>
<dbReference type="PRO" id="PR:A0A0A0MT78"/>
<dbReference type="Proteomes" id="UP000005640">
    <property type="component" value="Chromosome 7"/>
</dbReference>
<dbReference type="Bgee" id="ENSG00000211771">
    <property type="expression patterns" value="Expressed in granulocyte and 78 other cell types or tissues"/>
</dbReference>
<dbReference type="GO" id="GO:0042101">
    <property type="term" value="C:T cell receptor complex"/>
    <property type="evidence" value="ECO:0007669"/>
    <property type="project" value="UniProtKB-KW"/>
</dbReference>
<dbReference type="GO" id="GO:0002250">
    <property type="term" value="P:adaptive immune response"/>
    <property type="evidence" value="ECO:0007669"/>
    <property type="project" value="UniProtKB-KW"/>
</dbReference>
<sequence>SYEQYFGPGTRLTVT</sequence>
<keyword id="KW-1064">Adaptive immunity</keyword>
<keyword id="KW-1003">Cell membrane</keyword>
<keyword id="KW-0391">Immunity</keyword>
<keyword id="KW-0472">Membrane</keyword>
<keyword id="KW-0675">Receptor</keyword>
<keyword id="KW-1185">Reference proteome</keyword>
<keyword id="KW-1279">T cell receptor</keyword>
<reference key="1">
    <citation type="journal article" date="2003" name="Nature">
        <title>The DNA sequence of human chromosome 7.</title>
        <authorList>
            <person name="Hillier L.W."/>
            <person name="Fulton R.S."/>
            <person name="Fulton L.A."/>
            <person name="Graves T.A."/>
            <person name="Pepin K.H."/>
            <person name="Wagner-McPherson C."/>
            <person name="Layman D."/>
            <person name="Maas J."/>
            <person name="Jaeger S."/>
            <person name="Walker R."/>
            <person name="Wylie K."/>
            <person name="Sekhon M."/>
            <person name="Becker M.C."/>
            <person name="O'Laughlin M.D."/>
            <person name="Schaller M.E."/>
            <person name="Fewell G.A."/>
            <person name="Delehaunty K.D."/>
            <person name="Miner T.L."/>
            <person name="Nash W.E."/>
            <person name="Cordes M."/>
            <person name="Du H."/>
            <person name="Sun H."/>
            <person name="Edwards J."/>
            <person name="Bradshaw-Cordum H."/>
            <person name="Ali J."/>
            <person name="Andrews S."/>
            <person name="Isak A."/>
            <person name="Vanbrunt A."/>
            <person name="Nguyen C."/>
            <person name="Du F."/>
            <person name="Lamar B."/>
            <person name="Courtney L."/>
            <person name="Kalicki J."/>
            <person name="Ozersky P."/>
            <person name="Bielicki L."/>
            <person name="Scott K."/>
            <person name="Holmes A."/>
            <person name="Harkins R."/>
            <person name="Harris A."/>
            <person name="Strong C.M."/>
            <person name="Hou S."/>
            <person name="Tomlinson C."/>
            <person name="Dauphin-Kohlberg S."/>
            <person name="Kozlowicz-Reilly A."/>
            <person name="Leonard S."/>
            <person name="Rohlfing T."/>
            <person name="Rock S.M."/>
            <person name="Tin-Wollam A.-M."/>
            <person name="Abbott A."/>
            <person name="Minx P."/>
            <person name="Maupin R."/>
            <person name="Strowmatt C."/>
            <person name="Latreille P."/>
            <person name="Miller N."/>
            <person name="Johnson D."/>
            <person name="Murray J."/>
            <person name="Woessner J.P."/>
            <person name="Wendl M.C."/>
            <person name="Yang S.-P."/>
            <person name="Schultz B.R."/>
            <person name="Wallis J.W."/>
            <person name="Spieth J."/>
            <person name="Bieri T.A."/>
            <person name="Nelson J.O."/>
            <person name="Berkowicz N."/>
            <person name="Wohldmann P.E."/>
            <person name="Cook L.L."/>
            <person name="Hickenbotham M.T."/>
            <person name="Eldred J."/>
            <person name="Williams D."/>
            <person name="Bedell J.A."/>
            <person name="Mardis E.R."/>
            <person name="Clifton S.W."/>
            <person name="Chissoe S.L."/>
            <person name="Marra M.A."/>
            <person name="Raymond C."/>
            <person name="Haugen E."/>
            <person name="Gillett W."/>
            <person name="Zhou Y."/>
            <person name="James R."/>
            <person name="Phelps K."/>
            <person name="Iadanoto S."/>
            <person name="Bubb K."/>
            <person name="Simms E."/>
            <person name="Levy R."/>
            <person name="Clendenning J."/>
            <person name="Kaul R."/>
            <person name="Kent W.J."/>
            <person name="Furey T.S."/>
            <person name="Baertsch R.A."/>
            <person name="Brent M.R."/>
            <person name="Keibler E."/>
            <person name="Flicek P."/>
            <person name="Bork P."/>
            <person name="Suyama M."/>
            <person name="Bailey J.A."/>
            <person name="Portnoy M.E."/>
            <person name="Torrents D."/>
            <person name="Chinwalla A.T."/>
            <person name="Gish W.R."/>
            <person name="Eddy S.R."/>
            <person name="McPherson J.D."/>
            <person name="Olson M.V."/>
            <person name="Eichler E.E."/>
            <person name="Green E.D."/>
            <person name="Waterston R.H."/>
            <person name="Wilson R.K."/>
        </authorList>
    </citation>
    <scope>NUCLEOTIDE SEQUENCE [LARGE SCALE GENOMIC DNA] (IMGT ALLELE TRBJ2-7*01)</scope>
</reference>
<reference key="2">
    <citation type="book" date="2001" name="The T Cell Receptor FactsBook.">
        <title>The T Cell Receptor FactsBook.</title>
        <editorList>
            <person name="Lefranc M.P."/>
            <person name="Lefranc G."/>
        </editorList>
        <authorList>
            <person name="Lefranc M.P."/>
            <person name="Lefranc G."/>
        </authorList>
    </citation>
    <scope>NOMENCLATURE</scope>
</reference>
<reference key="3">
    <citation type="journal article" date="2004" name="Nat. Rev. Immunol.">
        <title>The many important facets of T-cell repertoire diversity.</title>
        <authorList>
            <person name="Nikolich-Zugich J."/>
            <person name="Slifka M.K."/>
            <person name="Messaoudi I."/>
        </authorList>
    </citation>
    <scope>REVIEW ON T CELL REPERTOIRE DIVERSITY</scope>
</reference>
<reference key="4">
    <citation type="journal article" date="2010" name="Cold Spring Harb. Perspect. Biol.">
        <title>Structural biology of the T-cell receptor: insights into receptor assembly, ligand recognition, and initiation of signaling.</title>
        <authorList>
            <person name="Wucherpfennig K.W."/>
            <person name="Gagnon E."/>
            <person name="Call M.J."/>
            <person name="Huseby E.S."/>
            <person name="Call M.E."/>
        </authorList>
    </citation>
    <scope>REVIEW ON T CELL RECEPTOR-CD3 COMPLEX ASSEMBLY</scope>
    <scope>SUBCELLULAR LOCATION</scope>
</reference>
<reference key="5">
    <citation type="journal article" date="2013" name="Nat. Rev. Immunol.">
        <title>T cell receptor signalling networks: branched, diversified and bounded.</title>
        <authorList>
            <person name="Brownlie R.J."/>
            <person name="Zamoyska R."/>
        </authorList>
    </citation>
    <scope>REVIEW ON T CELL RECEPTOR SIGNALING</scope>
</reference>
<reference key="6">
    <citation type="journal article" date="2014" name="Front. Immunol.">
        <title>Immunoglobulin and T Cell Receptor Genes: IMGT((R)) and the Birth and Rise of Immunoinformatics.</title>
        <authorList>
            <person name="Lefranc M.P."/>
        </authorList>
    </citation>
    <scope>NOMENCLATURE</scope>
</reference>
<reference key="7">
    <citation type="journal article" date="2015" name="Annu. Rev. Immunol.">
        <title>T cell antigen receptor recognition of antigen-presenting molecules.</title>
        <authorList>
            <person name="Rossjohn J."/>
            <person name="Gras S."/>
            <person name="Miles J.J."/>
            <person name="Turner S.J."/>
            <person name="Godfrey D.I."/>
            <person name="McCluskey J."/>
        </authorList>
    </citation>
    <scope>REVIEW ON FUNCTION</scope>
</reference>
<name>TJB27_HUMAN</name>
<organism>
    <name type="scientific">Homo sapiens</name>
    <name type="common">Human</name>
    <dbReference type="NCBI Taxonomy" id="9606"/>
    <lineage>
        <taxon>Eukaryota</taxon>
        <taxon>Metazoa</taxon>
        <taxon>Chordata</taxon>
        <taxon>Craniata</taxon>
        <taxon>Vertebrata</taxon>
        <taxon>Euteleostomi</taxon>
        <taxon>Mammalia</taxon>
        <taxon>Eutheria</taxon>
        <taxon>Euarchontoglires</taxon>
        <taxon>Primates</taxon>
        <taxon>Haplorrhini</taxon>
        <taxon>Catarrhini</taxon>
        <taxon>Hominidae</taxon>
        <taxon>Homo</taxon>
    </lineage>
</organism>
<comment type="function">
    <text evidence="1 3 4 5">J region of the variable domain of T cell receptor (TR) beta chain that participates in the antigen recognition (PubMed:24600447). Alpha-beta T cell receptors are antigen specific receptors which are essential to the immune response and are present on the cell surface of T lymphocytes. Recognize peptide-major histocompatibility (MH) (pMH) complexes that are displayed by antigen presenting cells (APC), a prerequisite for efficient T cell adaptive immunity against pathogens (PubMed:25493333). Binding of alpha-beta TR to pMH complex initiates TR-CD3 clustering on the cell surface and intracellular activation of LCK that phosphorylates the ITAM motifs of CD3G, CD3D, CD3E and CD247 enabling the recruitment of ZAP70. In turn, ZAP70 phosphorylates LAT, which recruits numerous signaling molecules to form the LAT signalosome. The LAT signalosome propagates signal branching to three major signaling pathways, the calcium, the mitogen-activated protein kinase (MAPK) kinase and the nuclear factor NF-kappa-B (NF-kB) pathways, leading to the mobilization of transcription factors that are critical for gene expression and essential for T cell growth and differentiation (PubMed:23524462). The T cell repertoire is generated in the thymus, by V-(D)-J rearrangement. This repertoire is then shaped by intrathymic selection events to generate a peripheral T cell pool of self-MH restricted, non-autoaggressive T cells. Post-thymic interaction of alpha-beta TR with the pMH complexes shapes TR structural and functional avidity (PubMed:15040585).</text>
</comment>
<comment type="subunit">
    <text evidence="2">Alpha-beta TR is a heterodimer composed of an alpha and beta chain; disulfide-linked. The alpha-beta TR is associated with the transmembrane signaling CD3 coreceptor proteins to form the TR-CD3 (TcR or TCR). The assembly of alpha-beta TR heterodimers with CD3 occurs in the endoplasmic reticulum where a single alpha-beta TR heterodimer associates with one CD3D-CD3E heterodimer, one CD3G-CD3E heterodimer and one CD247 homodimer forming a stable octameric structure. CD3D-CD3E and CD3G-CD3E heterodimers preferentially associate with TR alpha and TR beta chains, respectively. The association of the CD247 homodimer is the last step of TcR assembly in the endoplasmic reticulum and is required for transport to the cell surface.</text>
</comment>
<comment type="subcellular location">
    <subcellularLocation>
        <location evidence="2">Cell membrane</location>
    </subcellularLocation>
</comment>
<comment type="polymorphism">
    <text evidence="7">There are two alleles TRBJ2-7*01 and TRBJ2-7*02. The sequence shown is that of IMGT allele TRBJ2-7*01.</text>
</comment>
<proteinExistence type="predicted"/>
<feature type="chain" id="PRO_0000447043" description="T cell receptor beta joining 2-7">
    <location>
        <begin position="1" status="less than"/>
        <end position="15" status="greater than"/>
    </location>
</feature>
<feature type="non-terminal residue">
    <location>
        <position position="1"/>
    </location>
</feature>
<feature type="non-terminal residue">
    <location>
        <position position="15"/>
    </location>
</feature>
<evidence type="ECO:0000303" key="1">
    <source>
    </source>
</evidence>
<evidence type="ECO:0000303" key="2">
    <source>
    </source>
</evidence>
<evidence type="ECO:0000303" key="3">
    <source>
    </source>
</evidence>
<evidence type="ECO:0000303" key="4">
    <source>
    </source>
</evidence>
<evidence type="ECO:0000303" key="5">
    <source>
    </source>
</evidence>
<evidence type="ECO:0000303" key="6">
    <source ref="2"/>
</evidence>
<evidence type="ECO:0000305" key="7"/>
<evidence type="ECO:0000312" key="8">
    <source>
        <dbReference type="HGNC" id="HGNC:12175"/>
    </source>
</evidence>
<accession>A0A0A0MT78</accession>
<gene>
    <name evidence="6 8" type="primary">TRBJ2-7</name>
</gene>
<protein>
    <recommendedName>
        <fullName evidence="6">T cell receptor beta joining 2-7</fullName>
    </recommendedName>
</protein>